<proteinExistence type="inferred from homology"/>
<accession>B0RWC5</accession>
<comment type="function">
    <text evidence="1">F(1)F(0) ATP synthase produces ATP from ADP in the presence of a proton or sodium gradient. F-type ATPases consist of two structural domains, F(1) containing the extramembraneous catalytic core and F(0) containing the membrane proton channel, linked together by a central stalk and a peripheral stalk. During catalysis, ATP synthesis in the catalytic domain of F(1) is coupled via a rotary mechanism of the central stalk subunits to proton translocation.</text>
</comment>
<comment type="function">
    <text evidence="1">This protein is part of the stalk that links CF(0) to CF(1). It either transmits conformational changes from CF(0) to CF(1) or is implicated in proton conduction.</text>
</comment>
<comment type="subunit">
    <text evidence="1">F-type ATPases have 2 components, F(1) - the catalytic core - and F(0) - the membrane proton channel. F(1) has five subunits: alpha(3), beta(3), gamma(1), delta(1), epsilon(1). F(0) has three main subunits: a(1), b(2) and c(10-14). The alpha and beta chains form an alternating ring which encloses part of the gamma chain. F(1) is attached to F(0) by a central stalk formed by the gamma and epsilon chains, while a peripheral stalk is formed by the delta and b chains.</text>
</comment>
<comment type="subcellular location">
    <subcellularLocation>
        <location evidence="1">Cell inner membrane</location>
        <topology evidence="1">Peripheral membrane protein</topology>
    </subcellularLocation>
</comment>
<comment type="similarity">
    <text evidence="1">Belongs to the ATPase delta chain family.</text>
</comment>
<organism>
    <name type="scientific">Xanthomonas campestris pv. campestris (strain B100)</name>
    <dbReference type="NCBI Taxonomy" id="509169"/>
    <lineage>
        <taxon>Bacteria</taxon>
        <taxon>Pseudomonadati</taxon>
        <taxon>Pseudomonadota</taxon>
        <taxon>Gammaproteobacteria</taxon>
        <taxon>Lysobacterales</taxon>
        <taxon>Lysobacteraceae</taxon>
        <taxon>Xanthomonas</taxon>
    </lineage>
</organism>
<keyword id="KW-0066">ATP synthesis</keyword>
<keyword id="KW-0997">Cell inner membrane</keyword>
<keyword id="KW-1003">Cell membrane</keyword>
<keyword id="KW-0139">CF(1)</keyword>
<keyword id="KW-0375">Hydrogen ion transport</keyword>
<keyword id="KW-0406">Ion transport</keyword>
<keyword id="KW-0472">Membrane</keyword>
<keyword id="KW-0813">Transport</keyword>
<protein>
    <recommendedName>
        <fullName evidence="1">ATP synthase subunit delta</fullName>
    </recommendedName>
    <alternativeName>
        <fullName evidence="1">ATP synthase F(1) sector subunit delta</fullName>
    </alternativeName>
    <alternativeName>
        <fullName evidence="1">F-type ATPase subunit delta</fullName>
        <shortName evidence="1">F-ATPase subunit delta</shortName>
    </alternativeName>
</protein>
<feature type="chain" id="PRO_0000371198" description="ATP synthase subunit delta">
    <location>
        <begin position="1"/>
        <end position="175"/>
    </location>
</feature>
<reference key="1">
    <citation type="journal article" date="2008" name="J. Biotechnol.">
        <title>The genome of Xanthomonas campestris pv. campestris B100 and its use for the reconstruction of metabolic pathways involved in xanthan biosynthesis.</title>
        <authorList>
            <person name="Vorhoelter F.-J."/>
            <person name="Schneiker S."/>
            <person name="Goesmann A."/>
            <person name="Krause L."/>
            <person name="Bekel T."/>
            <person name="Kaiser O."/>
            <person name="Linke B."/>
            <person name="Patschkowski T."/>
            <person name="Rueckert C."/>
            <person name="Schmid J."/>
            <person name="Sidhu V.K."/>
            <person name="Sieber V."/>
            <person name="Tauch A."/>
            <person name="Watt S.A."/>
            <person name="Weisshaar B."/>
            <person name="Becker A."/>
            <person name="Niehaus K."/>
            <person name="Puehler A."/>
        </authorList>
    </citation>
    <scope>NUCLEOTIDE SEQUENCE [LARGE SCALE GENOMIC DNA]</scope>
    <source>
        <strain>B100</strain>
    </source>
</reference>
<dbReference type="EMBL" id="AM920689">
    <property type="protein sequence ID" value="CAP53164.1"/>
    <property type="molecule type" value="Genomic_DNA"/>
</dbReference>
<dbReference type="SMR" id="B0RWC5"/>
<dbReference type="KEGG" id="xca:xcc-b100_3797"/>
<dbReference type="HOGENOM" id="CLU_085114_3_0_6"/>
<dbReference type="Proteomes" id="UP000001188">
    <property type="component" value="Chromosome"/>
</dbReference>
<dbReference type="GO" id="GO:0005886">
    <property type="term" value="C:plasma membrane"/>
    <property type="evidence" value="ECO:0007669"/>
    <property type="project" value="UniProtKB-SubCell"/>
</dbReference>
<dbReference type="GO" id="GO:0045259">
    <property type="term" value="C:proton-transporting ATP synthase complex"/>
    <property type="evidence" value="ECO:0007669"/>
    <property type="project" value="UniProtKB-KW"/>
</dbReference>
<dbReference type="GO" id="GO:0046933">
    <property type="term" value="F:proton-transporting ATP synthase activity, rotational mechanism"/>
    <property type="evidence" value="ECO:0007669"/>
    <property type="project" value="UniProtKB-UniRule"/>
</dbReference>
<dbReference type="Gene3D" id="1.10.520.20">
    <property type="entry name" value="N-terminal domain of the delta subunit of the F1F0-ATP synthase"/>
    <property type="match status" value="1"/>
</dbReference>
<dbReference type="HAMAP" id="MF_01416">
    <property type="entry name" value="ATP_synth_delta_bact"/>
    <property type="match status" value="1"/>
</dbReference>
<dbReference type="InterPro" id="IPR026015">
    <property type="entry name" value="ATP_synth_OSCP/delta_N_sf"/>
</dbReference>
<dbReference type="InterPro" id="IPR000711">
    <property type="entry name" value="ATPase_OSCP/dsu"/>
</dbReference>
<dbReference type="NCBIfam" id="TIGR01145">
    <property type="entry name" value="ATP_synt_delta"/>
    <property type="match status" value="1"/>
</dbReference>
<dbReference type="NCBIfam" id="NF004402">
    <property type="entry name" value="PRK05758.2-2"/>
    <property type="match status" value="1"/>
</dbReference>
<dbReference type="PANTHER" id="PTHR11910">
    <property type="entry name" value="ATP SYNTHASE DELTA CHAIN"/>
    <property type="match status" value="1"/>
</dbReference>
<dbReference type="Pfam" id="PF00213">
    <property type="entry name" value="OSCP"/>
    <property type="match status" value="1"/>
</dbReference>
<dbReference type="PRINTS" id="PR00125">
    <property type="entry name" value="ATPASEDELTA"/>
</dbReference>
<dbReference type="SUPFAM" id="SSF47928">
    <property type="entry name" value="N-terminal domain of the delta subunit of the F1F0-ATP synthase"/>
    <property type="match status" value="1"/>
</dbReference>
<evidence type="ECO:0000255" key="1">
    <source>
        <dbReference type="HAMAP-Rule" id="MF_01416"/>
    </source>
</evidence>
<name>ATPD_XANCB</name>
<sequence length="175" mass="18359">MSQALTLARPYARAAFAIAREGGKFAPWSDALAFSAQVAGDPRVAALLLNPALHQDQAVTLLAPPAAEADYQRFLGLLADAQRLALLPEIAGLYEQLRAEAEHVVKATVTSATDMSPAELATITAALKKRFGREVDVTTAVDASLIGGAVIDTGEMVIDGSLKGKLARLQNSLAH</sequence>
<gene>
    <name evidence="1" type="primary">atpH</name>
    <name type="ordered locus">xcc-b100_3797</name>
</gene>